<accession>P61621</accession>
<accession>P38378</accession>
<accession>P57726</accession>
<accession>Q505I3</accession>
<reference key="1">
    <citation type="journal article" date="1992" name="Cell">
        <title>A mammalian homolog of SEC61p and SECYp is associated with ribosomes and nascent polypeptides during translocation.</title>
        <authorList>
            <person name="Goerlich D."/>
            <person name="Prehn S."/>
            <person name="Hartmann E."/>
            <person name="Kalies K.-U."/>
            <person name="Rapoport T.A."/>
        </authorList>
    </citation>
    <scope>NUCLEOTIDE SEQUENCE [MRNA]</scope>
    <source>
        <tissue>Liver</tissue>
    </source>
</reference>
<reference key="2">
    <citation type="journal article" date="2004" name="Genome Res.">
        <title>The status, quality, and expansion of the NIH full-length cDNA project: the Mammalian Gene Collection (MGC).</title>
        <authorList>
            <consortium name="The MGC Project Team"/>
        </authorList>
    </citation>
    <scope>NUCLEOTIDE SEQUENCE [LARGE SCALE MRNA]</scope>
    <source>
        <tissue>Brain</tissue>
    </source>
</reference>
<comment type="function">
    <text evidence="2 3">Component of SEC61 channel-forming translocon complex that mediates transport of signal peptide-containing precursor polypeptides across the endoplasmic reticulum (ER). Forms a ribosome receptor and a gated pore in the ER membrane, both functions required for cotranslational translocation of nascent polypeptides. May cooperate with auxiliary protein SEC62, SEC63 and HSPA5/BiP to enable post-translational transport of small presecretory proteins. The SEC61 channel is also involved in ER membrane insertion of transmembrane proteins: it mediates membrane insertion of the first few transmembrane segments of proteins, while insertion of subsequent transmembrane regions of multi-pass membrane proteins is mediated by the multi-pass translocon (MPT) complex. The SEC61 channel cooperates with the translocating protein TRAM1 to import nascent proteins into the ER. Controls the passive efflux of calcium ions from the ER lumen to the cytosol through SEC61 channel, contributing to the maintenance of cellular calcium homeostasis (By similarity). Plays a critical role in nephrogenesis, specifically at pronephros stage (By similarity).</text>
</comment>
<comment type="subunit">
    <text evidence="1 2">The SEC61 channel-forming translocon complex consists of channel-forming core components SEC61A1, SEC61B and SEC61G and different auxiliary components such as SEC62 and SEC63 (By similarity). The SEC61 channel associates with the multi-pass translocon (MPT) complex (By similarity).</text>
</comment>
<comment type="subcellular location">
    <subcellularLocation>
        <location evidence="2">Endoplasmic reticulum membrane</location>
        <topology evidence="5">Multi-pass membrane protein</topology>
    </subcellularLocation>
    <text evidence="2">Localizes exclusively in granular structures in the endoplasmic reticulum (ER).</text>
</comment>
<comment type="similarity">
    <text evidence="5">Belongs to the SecY/SEC61-alpha family.</text>
</comment>
<proteinExistence type="evidence at transcript level"/>
<keyword id="KW-0217">Developmental protein</keyword>
<keyword id="KW-0256">Endoplasmic reticulum</keyword>
<keyword id="KW-0472">Membrane</keyword>
<keyword id="KW-0653">Protein transport</keyword>
<keyword id="KW-1185">Reference proteome</keyword>
<keyword id="KW-0811">Translocation</keyword>
<keyword id="KW-0812">Transmembrane</keyword>
<keyword id="KW-1133">Transmembrane helix</keyword>
<keyword id="KW-0813">Transport</keyword>
<dbReference type="EMBL" id="M96630">
    <property type="protein sequence ID" value="AAA42125.1"/>
    <property type="molecule type" value="mRNA"/>
</dbReference>
<dbReference type="EMBL" id="BC094530">
    <property type="protein sequence ID" value="AAH94530.1"/>
    <property type="molecule type" value="mRNA"/>
</dbReference>
<dbReference type="RefSeq" id="NP_954865.1">
    <property type="nucleotide sequence ID" value="NM_199256.3"/>
</dbReference>
<dbReference type="SMR" id="P61621"/>
<dbReference type="FunCoup" id="P61621">
    <property type="interactions" value="2507"/>
</dbReference>
<dbReference type="IntAct" id="P61621">
    <property type="interactions" value="4"/>
</dbReference>
<dbReference type="STRING" id="10116.ENSRNOP00000018455"/>
<dbReference type="iPTMnet" id="P61621"/>
<dbReference type="PhosphoSitePlus" id="P61621"/>
<dbReference type="jPOST" id="P61621"/>
<dbReference type="PaxDb" id="10116-ENSRNOP00000018455"/>
<dbReference type="GeneID" id="80843"/>
<dbReference type="KEGG" id="rno:80843"/>
<dbReference type="UCSC" id="RGD:68321">
    <property type="organism name" value="rat"/>
</dbReference>
<dbReference type="AGR" id="RGD:68321"/>
<dbReference type="CTD" id="29927"/>
<dbReference type="RGD" id="68321">
    <property type="gene designation" value="Sec61a1"/>
</dbReference>
<dbReference type="VEuPathDB" id="HostDB:ENSRNOG00000013743"/>
<dbReference type="eggNOG" id="KOG1373">
    <property type="taxonomic scope" value="Eukaryota"/>
</dbReference>
<dbReference type="HOGENOM" id="CLU_031763_2_0_1"/>
<dbReference type="InParanoid" id="P61621"/>
<dbReference type="OrthoDB" id="12749at9989"/>
<dbReference type="PhylomeDB" id="P61621"/>
<dbReference type="TreeFam" id="TF300348"/>
<dbReference type="PRO" id="PR:P61621"/>
<dbReference type="Proteomes" id="UP000002494">
    <property type="component" value="Chromosome 4"/>
</dbReference>
<dbReference type="Bgee" id="ENSRNOG00000013743">
    <property type="expression patterns" value="Expressed in pancreas and 19 other cell types or tissues"/>
</dbReference>
<dbReference type="GO" id="GO:0005789">
    <property type="term" value="C:endoplasmic reticulum membrane"/>
    <property type="evidence" value="ECO:0000250"/>
    <property type="project" value="UniProtKB"/>
</dbReference>
<dbReference type="GO" id="GO:0016020">
    <property type="term" value="C:membrane"/>
    <property type="evidence" value="ECO:0000266"/>
    <property type="project" value="RGD"/>
</dbReference>
<dbReference type="GO" id="GO:0005784">
    <property type="term" value="C:Sec61 translocon complex"/>
    <property type="evidence" value="ECO:0000266"/>
    <property type="project" value="RGD"/>
</dbReference>
<dbReference type="GO" id="GO:0005262">
    <property type="term" value="F:calcium channel activity"/>
    <property type="evidence" value="ECO:0000250"/>
    <property type="project" value="UniProtKB"/>
</dbReference>
<dbReference type="GO" id="GO:0008320">
    <property type="term" value="F:protein transmembrane transporter activity"/>
    <property type="evidence" value="ECO:0000318"/>
    <property type="project" value="GO_Central"/>
</dbReference>
<dbReference type="GO" id="GO:0043022">
    <property type="term" value="F:ribosome binding"/>
    <property type="evidence" value="ECO:0000250"/>
    <property type="project" value="UniProtKB"/>
</dbReference>
<dbReference type="GO" id="GO:0005048">
    <property type="term" value="F:signal sequence binding"/>
    <property type="evidence" value="ECO:0000318"/>
    <property type="project" value="GO_Central"/>
</dbReference>
<dbReference type="GO" id="GO:0022857">
    <property type="term" value="F:transmembrane transporter activity"/>
    <property type="evidence" value="ECO:0000266"/>
    <property type="project" value="RGD"/>
</dbReference>
<dbReference type="GO" id="GO:0006613">
    <property type="term" value="P:cotranslational protein targeting to membrane"/>
    <property type="evidence" value="ECO:0000250"/>
    <property type="project" value="UniProtKB"/>
</dbReference>
<dbReference type="GO" id="GO:0007029">
    <property type="term" value="P:endoplasmic reticulum organization"/>
    <property type="evidence" value="ECO:0000266"/>
    <property type="project" value="RGD"/>
</dbReference>
<dbReference type="GO" id="GO:0006620">
    <property type="term" value="P:post-translational protein targeting to endoplasmic reticulum membrane"/>
    <property type="evidence" value="ECO:0000266"/>
    <property type="project" value="RGD"/>
</dbReference>
<dbReference type="GO" id="GO:0031204">
    <property type="term" value="P:post-translational protein targeting to membrane, translocation"/>
    <property type="evidence" value="ECO:0000250"/>
    <property type="project" value="UniProtKB"/>
</dbReference>
<dbReference type="GO" id="GO:0039019">
    <property type="term" value="P:pronephric nephron development"/>
    <property type="evidence" value="ECO:0000250"/>
    <property type="project" value="UniProtKB"/>
</dbReference>
<dbReference type="GO" id="GO:0045048">
    <property type="term" value="P:protein insertion into ER membrane"/>
    <property type="evidence" value="ECO:0000250"/>
    <property type="project" value="UniProtKB"/>
</dbReference>
<dbReference type="GO" id="GO:0045047">
    <property type="term" value="P:protein targeting to ER"/>
    <property type="evidence" value="ECO:0000266"/>
    <property type="project" value="RGD"/>
</dbReference>
<dbReference type="GO" id="GO:0034341">
    <property type="term" value="P:response to type II interferon"/>
    <property type="evidence" value="ECO:0000270"/>
    <property type="project" value="RGD"/>
</dbReference>
<dbReference type="GO" id="GO:0006614">
    <property type="term" value="P:SRP-dependent cotranslational protein targeting to membrane"/>
    <property type="evidence" value="ECO:0000266"/>
    <property type="project" value="RGD"/>
</dbReference>
<dbReference type="GO" id="GO:0006616">
    <property type="term" value="P:SRP-dependent cotranslational protein targeting to membrane, translocation"/>
    <property type="evidence" value="ECO:0000318"/>
    <property type="project" value="GO_Central"/>
</dbReference>
<dbReference type="FunFam" id="1.10.3370.10:FF:000002">
    <property type="entry name" value="Transport Sec61 subunit alpha isoform 2"/>
    <property type="match status" value="1"/>
</dbReference>
<dbReference type="Gene3D" id="1.10.3370.10">
    <property type="entry name" value="SecY subunit domain"/>
    <property type="match status" value="1"/>
</dbReference>
<dbReference type="InterPro" id="IPR002208">
    <property type="entry name" value="SecY/SEC61-alpha"/>
</dbReference>
<dbReference type="InterPro" id="IPR030659">
    <property type="entry name" value="SecY_CS"/>
</dbReference>
<dbReference type="InterPro" id="IPR023201">
    <property type="entry name" value="SecY_dom_sf"/>
</dbReference>
<dbReference type="InterPro" id="IPR019561">
    <property type="entry name" value="Translocon_Sec61/SecY_plug_dom"/>
</dbReference>
<dbReference type="NCBIfam" id="TIGR00967">
    <property type="entry name" value="3a0501s007"/>
    <property type="match status" value="1"/>
</dbReference>
<dbReference type="NCBIfam" id="NF006341">
    <property type="entry name" value="PRK08568.1-5"/>
    <property type="match status" value="1"/>
</dbReference>
<dbReference type="PANTHER" id="PTHR10906">
    <property type="entry name" value="SECY/SEC61-ALPHA FAMILY MEMBER"/>
    <property type="match status" value="1"/>
</dbReference>
<dbReference type="Pfam" id="PF10559">
    <property type="entry name" value="Plug_translocon"/>
    <property type="match status" value="1"/>
</dbReference>
<dbReference type="Pfam" id="PF00344">
    <property type="entry name" value="SecY"/>
    <property type="match status" value="1"/>
</dbReference>
<dbReference type="PIRSF" id="PIRSF004557">
    <property type="entry name" value="SecY"/>
    <property type="match status" value="1"/>
</dbReference>
<dbReference type="SUPFAM" id="SSF103491">
    <property type="entry name" value="Preprotein translocase SecY subunit"/>
    <property type="match status" value="1"/>
</dbReference>
<dbReference type="PROSITE" id="PS00755">
    <property type="entry name" value="SECY_1"/>
    <property type="match status" value="1"/>
</dbReference>
<dbReference type="PROSITE" id="PS00756">
    <property type="entry name" value="SECY_2"/>
    <property type="match status" value="1"/>
</dbReference>
<name>S61A1_RAT</name>
<evidence type="ECO:0000250" key="1">
    <source>
        <dbReference type="UniProtKB" id="P38377"/>
    </source>
</evidence>
<evidence type="ECO:0000250" key="2">
    <source>
        <dbReference type="UniProtKB" id="P61619"/>
    </source>
</evidence>
<evidence type="ECO:0000250" key="3">
    <source>
        <dbReference type="UniProtKB" id="P61620"/>
    </source>
</evidence>
<evidence type="ECO:0000255" key="4"/>
<evidence type="ECO:0000305" key="5"/>
<protein>
    <recommendedName>
        <fullName>Protein transport protein Sec61 subunit alpha isoform 1</fullName>
        <shortName>Sec61 alpha-1</shortName>
    </recommendedName>
</protein>
<organism>
    <name type="scientific">Rattus norvegicus</name>
    <name type="common">Rat</name>
    <dbReference type="NCBI Taxonomy" id="10116"/>
    <lineage>
        <taxon>Eukaryota</taxon>
        <taxon>Metazoa</taxon>
        <taxon>Chordata</taxon>
        <taxon>Craniata</taxon>
        <taxon>Vertebrata</taxon>
        <taxon>Euteleostomi</taxon>
        <taxon>Mammalia</taxon>
        <taxon>Eutheria</taxon>
        <taxon>Euarchontoglires</taxon>
        <taxon>Glires</taxon>
        <taxon>Rodentia</taxon>
        <taxon>Myomorpha</taxon>
        <taxon>Muroidea</taxon>
        <taxon>Muridae</taxon>
        <taxon>Murinae</taxon>
        <taxon>Rattus</taxon>
    </lineage>
</organism>
<feature type="chain" id="PRO_0000131794" description="Protein transport protein Sec61 subunit alpha isoform 1">
    <location>
        <begin position="1"/>
        <end position="476"/>
    </location>
</feature>
<feature type="topological domain" description="Cytoplasmic" evidence="4">
    <location>
        <begin position="1"/>
        <end position="33"/>
    </location>
</feature>
<feature type="transmembrane region" description="Helical" evidence="4">
    <location>
        <begin position="34"/>
        <end position="53"/>
    </location>
</feature>
<feature type="topological domain" description="Lumenal" evidence="4">
    <location>
        <begin position="54"/>
        <end position="76"/>
    </location>
</feature>
<feature type="transmembrane region" description="Helical" evidence="4">
    <location>
        <begin position="77"/>
        <end position="96"/>
    </location>
</feature>
<feature type="topological domain" description="Cytoplasmic" evidence="4">
    <location>
        <begin position="97"/>
        <end position="117"/>
    </location>
</feature>
<feature type="transmembrane region" description="Helical" evidence="4">
    <location>
        <begin position="118"/>
        <end position="138"/>
    </location>
</feature>
<feature type="topological domain" description="Lumenal" evidence="4">
    <location>
        <begin position="139"/>
        <end position="144"/>
    </location>
</feature>
<feature type="transmembrane region" description="Helical" evidence="4">
    <location>
        <begin position="145"/>
        <end position="165"/>
    </location>
</feature>
<feature type="topological domain" description="Cytoplasmic" evidence="4">
    <location>
        <begin position="166"/>
        <end position="172"/>
    </location>
</feature>
<feature type="transmembrane region" description="Helical" evidence="4">
    <location>
        <begin position="173"/>
        <end position="193"/>
    </location>
</feature>
<feature type="topological domain" description="Lumenal" evidence="4">
    <location>
        <begin position="194"/>
        <end position="240"/>
    </location>
</feature>
<feature type="transmembrane region" description="Helical" evidence="4">
    <location>
        <begin position="241"/>
        <end position="261"/>
    </location>
</feature>
<feature type="topological domain" description="Cytoplasmic" evidence="4">
    <location>
        <begin position="262"/>
        <end position="288"/>
    </location>
</feature>
<feature type="transmembrane region" description="Helical" evidence="4">
    <location>
        <begin position="289"/>
        <end position="309"/>
    </location>
</feature>
<feature type="topological domain" description="Lumenal" evidence="4">
    <location>
        <begin position="310"/>
        <end position="354"/>
    </location>
</feature>
<feature type="transmembrane region" description="Helical" evidence="4">
    <location>
        <begin position="355"/>
        <end position="375"/>
    </location>
</feature>
<feature type="topological domain" description="Cytoplasmic" evidence="4">
    <location>
        <begin position="376"/>
        <end position="420"/>
    </location>
</feature>
<feature type="transmembrane region" description="Helical" evidence="4">
    <location>
        <begin position="421"/>
        <end position="441"/>
    </location>
</feature>
<feature type="topological domain" description="Lumenal" evidence="4">
    <location>
        <begin position="442"/>
        <end position="445"/>
    </location>
</feature>
<feature type="transmembrane region" description="Helical" evidence="4">
    <location>
        <begin position="446"/>
        <end position="462"/>
    </location>
</feature>
<feature type="topological domain" description="Cytoplasmic" evidence="4">
    <location>
        <begin position="463"/>
        <end position="476"/>
    </location>
</feature>
<sequence length="476" mass="52265">MAIKFLEVIKPFCVILPEIQKPERKIQFKEKVLWTAITLFIFLVCCQIPLFGIMSSDSADPFYWMRVILASNRGTLMELGISPIVTSGLIMQLLAGAKIIEVGDTPKDRALFNGAQKLFGMIITIGQSIVYVMTGMYGDPSEMGAGICLLITIQLFVAGLIVLLLDELLQKGYGLGSGISLFIATNICETIVWKAFSPTTVNTGRGMEFEGAIIALFHLLATRTDKVRALREAFYRQNLPNLMNLIATIFVFAVVIYFQGFRVDLPIKSARYRGQYNTYPIKLFYTSNIPIILQSALVSNLYVISQMLSARFSGNLLVSLLGTWSDTSSGGPARAYPVGGLCYYLSPPESFGSVLEDPVHAVVYIVFMLGSCAFFSKTWIEVSGSSAKDVAKQLKEQQMVMRGHRETSMVHELNRYIPTAAAFGGLCIGALSVLADFLGAIGSGTGILLAVTIIYQYFEIFVKEQSEVGSMGALLF</sequence>
<gene>
    <name type="primary">Sec61a1</name>
    <name type="synonym">Sec61a</name>
</gene>